<keyword id="KW-0030">Aminoacyl-tRNA synthetase</keyword>
<keyword id="KW-0067">ATP-binding</keyword>
<keyword id="KW-0963">Cytoplasm</keyword>
<keyword id="KW-0436">Ligase</keyword>
<keyword id="KW-0547">Nucleotide-binding</keyword>
<keyword id="KW-0648">Protein biosynthesis</keyword>
<keyword id="KW-1185">Reference proteome</keyword>
<accession>Q30YL0</accession>
<organism>
    <name type="scientific">Oleidesulfovibrio alaskensis (strain ATCC BAA-1058 / DSM 17464 / G20)</name>
    <name type="common">Desulfovibrio alaskensis</name>
    <dbReference type="NCBI Taxonomy" id="207559"/>
    <lineage>
        <taxon>Bacteria</taxon>
        <taxon>Pseudomonadati</taxon>
        <taxon>Thermodesulfobacteriota</taxon>
        <taxon>Desulfovibrionia</taxon>
        <taxon>Desulfovibrionales</taxon>
        <taxon>Desulfovibrionaceae</taxon>
        <taxon>Oleidesulfovibrio</taxon>
    </lineage>
</organism>
<feature type="chain" id="PRO_1000009334" description="Leucine--tRNA ligase">
    <location>
        <begin position="1"/>
        <end position="829"/>
    </location>
</feature>
<feature type="short sequence motif" description="'HIGH' region">
    <location>
        <begin position="40"/>
        <end position="50"/>
    </location>
</feature>
<feature type="short sequence motif" description="'KMSKS' region">
    <location>
        <begin position="581"/>
        <end position="585"/>
    </location>
</feature>
<feature type="binding site" evidence="1">
    <location>
        <position position="584"/>
    </location>
    <ligand>
        <name>ATP</name>
        <dbReference type="ChEBI" id="CHEBI:30616"/>
    </ligand>
</feature>
<sequence length="829" mass="93741">MKYNPQAIEEKWQHIWEEKEMFRSEHGSDKPKYYVLEMFPYPSGNIHMGHVRNYSIGDVVARFKRMQGFNVLHPMGWDAFGLPAENAAIKHDTHPAKWTYSNIDNMRSQLKRLGYSYDWRRELATCDAEYYRWEQLFFLKFMEKGLIYRKKAPQNWCPKCNTVLANEQVIDGLCWRCDSVVEQRDLAQWFLRITSYAEELLADLEKLTGGWPDRVLTMQHNWIGKSVGAEIEFAVDGSDETVKVFTTRPDTVFGSTFMSIAPEHPLVEKLITGTGQEETVRAFVTRIRNMDRIERTADTLEKEGVFTGAYCINPLSGRRMPIYVANFVLAEYGTGAVMAVPAHDERDFEFARKYDLPMEVVIQPEGAELTPATMETAYTGQGTMVGSGQFSGLPNEEGKTKIAEWLEANGKGKRTVNYRLRDWNISRQRYWGAPIPVVYCEKCGIVPEKAENLPVRLPLDIKTRSDGRSPLGETPEFYECRCPACGEKARRETDTMDTFVESSWYFARYTSAGDNEAPFDAQALKYWLPVDQYIGGVEHAILHLLYARFFIKALRDCGYMDLDEPFANLLTQGMVLMDGAKMSKSKGNVVDPTEMISRYGADTVRLFCLFAAPPERDFDWSDSGIEGASRFVNRVWRLVEDLPAGMAPMAPCSSSSDDCTGAAAKDIRQKEHATVKKAGADIQNRFQFNTAISAVMELVNALYLTRDELGADEKGRRVLGSAVSSVLAMLAPITPHLCEELWEQLGHKDMLTARPWPRYDEDALLRDEVVIPVSVNGKLRSKMTVPAGTGKEELEKLALAEANVVRHTEGLTVRKVIVIPGKMVNVVAS</sequence>
<evidence type="ECO:0000255" key="1">
    <source>
        <dbReference type="HAMAP-Rule" id="MF_00049"/>
    </source>
</evidence>
<reference key="1">
    <citation type="journal article" date="2011" name="J. Bacteriol.">
        <title>Complete genome sequence and updated annotation of Desulfovibrio alaskensis G20.</title>
        <authorList>
            <person name="Hauser L.J."/>
            <person name="Land M.L."/>
            <person name="Brown S.D."/>
            <person name="Larimer F."/>
            <person name="Keller K.L."/>
            <person name="Rapp-Giles B.J."/>
            <person name="Price M.N."/>
            <person name="Lin M."/>
            <person name="Bruce D.C."/>
            <person name="Detter J.C."/>
            <person name="Tapia R."/>
            <person name="Han C.S."/>
            <person name="Goodwin L.A."/>
            <person name="Cheng J.F."/>
            <person name="Pitluck S."/>
            <person name="Copeland A."/>
            <person name="Lucas S."/>
            <person name="Nolan M."/>
            <person name="Lapidus A.L."/>
            <person name="Palumbo A.V."/>
            <person name="Wall J.D."/>
        </authorList>
    </citation>
    <scope>NUCLEOTIDE SEQUENCE [LARGE SCALE GENOMIC DNA]</scope>
    <source>
        <strain>ATCC BAA-1058 / DSM 17464 / G20</strain>
    </source>
</reference>
<name>SYL_OLEA2</name>
<comment type="catalytic activity">
    <reaction evidence="1">
        <text>tRNA(Leu) + L-leucine + ATP = L-leucyl-tRNA(Leu) + AMP + diphosphate</text>
        <dbReference type="Rhea" id="RHEA:11688"/>
        <dbReference type="Rhea" id="RHEA-COMP:9613"/>
        <dbReference type="Rhea" id="RHEA-COMP:9622"/>
        <dbReference type="ChEBI" id="CHEBI:30616"/>
        <dbReference type="ChEBI" id="CHEBI:33019"/>
        <dbReference type="ChEBI" id="CHEBI:57427"/>
        <dbReference type="ChEBI" id="CHEBI:78442"/>
        <dbReference type="ChEBI" id="CHEBI:78494"/>
        <dbReference type="ChEBI" id="CHEBI:456215"/>
        <dbReference type="EC" id="6.1.1.4"/>
    </reaction>
</comment>
<comment type="subcellular location">
    <subcellularLocation>
        <location evidence="1">Cytoplasm</location>
    </subcellularLocation>
</comment>
<comment type="similarity">
    <text evidence="1">Belongs to the class-I aminoacyl-tRNA synthetase family.</text>
</comment>
<gene>
    <name evidence="1" type="primary">leuS</name>
    <name type="ordered locus">Dde_2439</name>
</gene>
<proteinExistence type="inferred from homology"/>
<dbReference type="EC" id="6.1.1.4" evidence="1"/>
<dbReference type="EMBL" id="CP000112">
    <property type="protein sequence ID" value="ABB39236.1"/>
    <property type="molecule type" value="Genomic_DNA"/>
</dbReference>
<dbReference type="RefSeq" id="WP_011368305.1">
    <property type="nucleotide sequence ID" value="NC_007519.1"/>
</dbReference>
<dbReference type="SMR" id="Q30YL0"/>
<dbReference type="STRING" id="207559.Dde_2439"/>
<dbReference type="KEGG" id="dde:Dde_2439"/>
<dbReference type="eggNOG" id="COG0495">
    <property type="taxonomic scope" value="Bacteria"/>
</dbReference>
<dbReference type="HOGENOM" id="CLU_004427_0_0_7"/>
<dbReference type="Proteomes" id="UP000002710">
    <property type="component" value="Chromosome"/>
</dbReference>
<dbReference type="GO" id="GO:0005829">
    <property type="term" value="C:cytosol"/>
    <property type="evidence" value="ECO:0007669"/>
    <property type="project" value="TreeGrafter"/>
</dbReference>
<dbReference type="GO" id="GO:0002161">
    <property type="term" value="F:aminoacyl-tRNA deacylase activity"/>
    <property type="evidence" value="ECO:0007669"/>
    <property type="project" value="InterPro"/>
</dbReference>
<dbReference type="GO" id="GO:0005524">
    <property type="term" value="F:ATP binding"/>
    <property type="evidence" value="ECO:0007669"/>
    <property type="project" value="UniProtKB-UniRule"/>
</dbReference>
<dbReference type="GO" id="GO:0004823">
    <property type="term" value="F:leucine-tRNA ligase activity"/>
    <property type="evidence" value="ECO:0007669"/>
    <property type="project" value="UniProtKB-UniRule"/>
</dbReference>
<dbReference type="GO" id="GO:0006429">
    <property type="term" value="P:leucyl-tRNA aminoacylation"/>
    <property type="evidence" value="ECO:0007669"/>
    <property type="project" value="UniProtKB-UniRule"/>
</dbReference>
<dbReference type="CDD" id="cd07958">
    <property type="entry name" value="Anticodon_Ia_Leu_BEm"/>
    <property type="match status" value="1"/>
</dbReference>
<dbReference type="CDD" id="cd00812">
    <property type="entry name" value="LeuRS_core"/>
    <property type="match status" value="1"/>
</dbReference>
<dbReference type="FunFam" id="1.10.730.10:FF:000002">
    <property type="entry name" value="Leucine--tRNA ligase"/>
    <property type="match status" value="1"/>
</dbReference>
<dbReference type="FunFam" id="3.40.50.620:FF:000003">
    <property type="entry name" value="Leucine--tRNA ligase"/>
    <property type="match status" value="1"/>
</dbReference>
<dbReference type="FunFam" id="3.40.50.620:FF:000056">
    <property type="entry name" value="Leucine--tRNA ligase"/>
    <property type="match status" value="1"/>
</dbReference>
<dbReference type="Gene3D" id="3.10.20.590">
    <property type="match status" value="1"/>
</dbReference>
<dbReference type="Gene3D" id="3.40.50.620">
    <property type="entry name" value="HUPs"/>
    <property type="match status" value="2"/>
</dbReference>
<dbReference type="Gene3D" id="1.10.730.10">
    <property type="entry name" value="Isoleucyl-tRNA Synthetase, Domain 1"/>
    <property type="match status" value="1"/>
</dbReference>
<dbReference type="HAMAP" id="MF_00049_B">
    <property type="entry name" value="Leu_tRNA_synth_B"/>
    <property type="match status" value="1"/>
</dbReference>
<dbReference type="InterPro" id="IPR001412">
    <property type="entry name" value="aa-tRNA-synth_I_CS"/>
</dbReference>
<dbReference type="InterPro" id="IPR002300">
    <property type="entry name" value="aa-tRNA-synth_Ia"/>
</dbReference>
<dbReference type="InterPro" id="IPR002302">
    <property type="entry name" value="Leu-tRNA-ligase"/>
</dbReference>
<dbReference type="InterPro" id="IPR025709">
    <property type="entry name" value="Leu_tRNA-synth_edit"/>
</dbReference>
<dbReference type="InterPro" id="IPR013155">
    <property type="entry name" value="M/V/L/I-tRNA-synth_anticd-bd"/>
</dbReference>
<dbReference type="InterPro" id="IPR015413">
    <property type="entry name" value="Methionyl/Leucyl_tRNA_Synth"/>
</dbReference>
<dbReference type="InterPro" id="IPR014729">
    <property type="entry name" value="Rossmann-like_a/b/a_fold"/>
</dbReference>
<dbReference type="InterPro" id="IPR009080">
    <property type="entry name" value="tRNAsynth_Ia_anticodon-bd"/>
</dbReference>
<dbReference type="InterPro" id="IPR009008">
    <property type="entry name" value="Val/Leu/Ile-tRNA-synth_edit"/>
</dbReference>
<dbReference type="NCBIfam" id="TIGR00396">
    <property type="entry name" value="leuS_bact"/>
    <property type="match status" value="1"/>
</dbReference>
<dbReference type="PANTHER" id="PTHR43740:SF2">
    <property type="entry name" value="LEUCINE--TRNA LIGASE, MITOCHONDRIAL"/>
    <property type="match status" value="1"/>
</dbReference>
<dbReference type="PANTHER" id="PTHR43740">
    <property type="entry name" value="LEUCYL-TRNA SYNTHETASE"/>
    <property type="match status" value="1"/>
</dbReference>
<dbReference type="Pfam" id="PF08264">
    <property type="entry name" value="Anticodon_1"/>
    <property type="match status" value="1"/>
</dbReference>
<dbReference type="Pfam" id="PF00133">
    <property type="entry name" value="tRNA-synt_1"/>
    <property type="match status" value="1"/>
</dbReference>
<dbReference type="Pfam" id="PF13603">
    <property type="entry name" value="tRNA-synt_1_2"/>
    <property type="match status" value="1"/>
</dbReference>
<dbReference type="Pfam" id="PF09334">
    <property type="entry name" value="tRNA-synt_1g"/>
    <property type="match status" value="1"/>
</dbReference>
<dbReference type="PRINTS" id="PR00985">
    <property type="entry name" value="TRNASYNTHLEU"/>
</dbReference>
<dbReference type="SUPFAM" id="SSF47323">
    <property type="entry name" value="Anticodon-binding domain of a subclass of class I aminoacyl-tRNA synthetases"/>
    <property type="match status" value="1"/>
</dbReference>
<dbReference type="SUPFAM" id="SSF52374">
    <property type="entry name" value="Nucleotidylyl transferase"/>
    <property type="match status" value="1"/>
</dbReference>
<dbReference type="SUPFAM" id="SSF50677">
    <property type="entry name" value="ValRS/IleRS/LeuRS editing domain"/>
    <property type="match status" value="1"/>
</dbReference>
<dbReference type="PROSITE" id="PS00178">
    <property type="entry name" value="AA_TRNA_LIGASE_I"/>
    <property type="match status" value="1"/>
</dbReference>
<protein>
    <recommendedName>
        <fullName evidence="1">Leucine--tRNA ligase</fullName>
        <ecNumber evidence="1">6.1.1.4</ecNumber>
    </recommendedName>
    <alternativeName>
        <fullName evidence="1">Leucyl-tRNA synthetase</fullName>
        <shortName evidence="1">LeuRS</shortName>
    </alternativeName>
</protein>